<gene>
    <name evidence="1" type="primary">rpsM</name>
    <name type="ordered locus">CKL_0249</name>
</gene>
<proteinExistence type="inferred from homology"/>
<reference key="1">
    <citation type="journal article" date="2008" name="Proc. Natl. Acad. Sci. U.S.A.">
        <title>The genome of Clostridium kluyveri, a strict anaerobe with unique metabolic features.</title>
        <authorList>
            <person name="Seedorf H."/>
            <person name="Fricke W.F."/>
            <person name="Veith B."/>
            <person name="Brueggemann H."/>
            <person name="Liesegang H."/>
            <person name="Strittmatter A."/>
            <person name="Miethke M."/>
            <person name="Buckel W."/>
            <person name="Hinderberger J."/>
            <person name="Li F."/>
            <person name="Hagemeier C."/>
            <person name="Thauer R.K."/>
            <person name="Gottschalk G."/>
        </authorList>
    </citation>
    <scope>NUCLEOTIDE SEQUENCE [LARGE SCALE GENOMIC DNA]</scope>
    <source>
        <strain>ATCC 8527 / DSM 555 / NBRC 12016 / NCIMB 10680 / K1</strain>
    </source>
</reference>
<accession>A5N4S2</accession>
<keyword id="KW-1185">Reference proteome</keyword>
<keyword id="KW-0687">Ribonucleoprotein</keyword>
<keyword id="KW-0689">Ribosomal protein</keyword>
<keyword id="KW-0694">RNA-binding</keyword>
<keyword id="KW-0699">rRNA-binding</keyword>
<keyword id="KW-0820">tRNA-binding</keyword>
<evidence type="ECO:0000255" key="1">
    <source>
        <dbReference type="HAMAP-Rule" id="MF_01315"/>
    </source>
</evidence>
<evidence type="ECO:0000256" key="2">
    <source>
        <dbReference type="SAM" id="MobiDB-lite"/>
    </source>
</evidence>
<evidence type="ECO:0000305" key="3"/>
<protein>
    <recommendedName>
        <fullName evidence="1">Small ribosomal subunit protein uS13</fullName>
    </recommendedName>
    <alternativeName>
        <fullName evidence="3">30S ribosomal protein S13</fullName>
    </alternativeName>
</protein>
<dbReference type="EMBL" id="CP000673">
    <property type="protein sequence ID" value="EDK32303.1"/>
    <property type="molecule type" value="Genomic_DNA"/>
</dbReference>
<dbReference type="RefSeq" id="WP_011988828.1">
    <property type="nucleotide sequence ID" value="NC_009706.1"/>
</dbReference>
<dbReference type="SMR" id="A5N4S2"/>
<dbReference type="STRING" id="431943.CKL_0249"/>
<dbReference type="KEGG" id="ckl:CKL_0249"/>
<dbReference type="eggNOG" id="COG0099">
    <property type="taxonomic scope" value="Bacteria"/>
</dbReference>
<dbReference type="HOGENOM" id="CLU_103849_1_1_9"/>
<dbReference type="Proteomes" id="UP000002411">
    <property type="component" value="Chromosome"/>
</dbReference>
<dbReference type="GO" id="GO:0005829">
    <property type="term" value="C:cytosol"/>
    <property type="evidence" value="ECO:0007669"/>
    <property type="project" value="TreeGrafter"/>
</dbReference>
<dbReference type="GO" id="GO:0015935">
    <property type="term" value="C:small ribosomal subunit"/>
    <property type="evidence" value="ECO:0007669"/>
    <property type="project" value="TreeGrafter"/>
</dbReference>
<dbReference type="GO" id="GO:0019843">
    <property type="term" value="F:rRNA binding"/>
    <property type="evidence" value="ECO:0007669"/>
    <property type="project" value="UniProtKB-UniRule"/>
</dbReference>
<dbReference type="GO" id="GO:0003735">
    <property type="term" value="F:structural constituent of ribosome"/>
    <property type="evidence" value="ECO:0007669"/>
    <property type="project" value="InterPro"/>
</dbReference>
<dbReference type="GO" id="GO:0000049">
    <property type="term" value="F:tRNA binding"/>
    <property type="evidence" value="ECO:0007669"/>
    <property type="project" value="UniProtKB-UniRule"/>
</dbReference>
<dbReference type="GO" id="GO:0006412">
    <property type="term" value="P:translation"/>
    <property type="evidence" value="ECO:0007669"/>
    <property type="project" value="UniProtKB-UniRule"/>
</dbReference>
<dbReference type="FunFam" id="1.10.8.50:FF:000001">
    <property type="entry name" value="30S ribosomal protein S13"/>
    <property type="match status" value="1"/>
</dbReference>
<dbReference type="FunFam" id="4.10.910.10:FF:000001">
    <property type="entry name" value="30S ribosomal protein S13"/>
    <property type="match status" value="1"/>
</dbReference>
<dbReference type="Gene3D" id="1.10.8.50">
    <property type="match status" value="1"/>
</dbReference>
<dbReference type="Gene3D" id="4.10.910.10">
    <property type="entry name" value="30s ribosomal protein s13, domain 2"/>
    <property type="match status" value="1"/>
</dbReference>
<dbReference type="HAMAP" id="MF_01315">
    <property type="entry name" value="Ribosomal_uS13"/>
    <property type="match status" value="1"/>
</dbReference>
<dbReference type="InterPro" id="IPR027437">
    <property type="entry name" value="Rbsml_uS13_C"/>
</dbReference>
<dbReference type="InterPro" id="IPR001892">
    <property type="entry name" value="Ribosomal_uS13"/>
</dbReference>
<dbReference type="InterPro" id="IPR010979">
    <property type="entry name" value="Ribosomal_uS13-like_H2TH"/>
</dbReference>
<dbReference type="InterPro" id="IPR019980">
    <property type="entry name" value="Ribosomal_uS13_bac-type"/>
</dbReference>
<dbReference type="InterPro" id="IPR018269">
    <property type="entry name" value="Ribosomal_uS13_CS"/>
</dbReference>
<dbReference type="NCBIfam" id="TIGR03631">
    <property type="entry name" value="uS13_bact"/>
    <property type="match status" value="1"/>
</dbReference>
<dbReference type="PANTHER" id="PTHR10871">
    <property type="entry name" value="30S RIBOSOMAL PROTEIN S13/40S RIBOSOMAL PROTEIN S18"/>
    <property type="match status" value="1"/>
</dbReference>
<dbReference type="PANTHER" id="PTHR10871:SF1">
    <property type="entry name" value="SMALL RIBOSOMAL SUBUNIT PROTEIN US13M"/>
    <property type="match status" value="1"/>
</dbReference>
<dbReference type="Pfam" id="PF00416">
    <property type="entry name" value="Ribosomal_S13"/>
    <property type="match status" value="1"/>
</dbReference>
<dbReference type="PIRSF" id="PIRSF002134">
    <property type="entry name" value="Ribosomal_S13"/>
    <property type="match status" value="1"/>
</dbReference>
<dbReference type="SUPFAM" id="SSF46946">
    <property type="entry name" value="S13-like H2TH domain"/>
    <property type="match status" value="1"/>
</dbReference>
<dbReference type="PROSITE" id="PS00646">
    <property type="entry name" value="RIBOSOMAL_S13_1"/>
    <property type="match status" value="1"/>
</dbReference>
<dbReference type="PROSITE" id="PS50159">
    <property type="entry name" value="RIBOSOMAL_S13_2"/>
    <property type="match status" value="1"/>
</dbReference>
<comment type="function">
    <text evidence="1">Located at the top of the head of the 30S subunit, it contacts several helices of the 16S rRNA. In the 70S ribosome it contacts the 23S rRNA (bridge B1a) and protein L5 of the 50S subunit (bridge B1b), connecting the 2 subunits; these bridges are implicated in subunit movement. Contacts the tRNAs in the A and P-sites.</text>
</comment>
<comment type="subunit">
    <text evidence="1">Part of the 30S ribosomal subunit. Forms a loose heterodimer with protein S19. Forms two bridges to the 50S subunit in the 70S ribosome.</text>
</comment>
<comment type="similarity">
    <text evidence="1">Belongs to the universal ribosomal protein uS13 family.</text>
</comment>
<sequence>MARIAGIDLPKEKRVEIGLTYIYGIGLPTSQKILKETGVNSDTRVKDLTEEEVNLLRNYIKNLKIEGDLRREVALNIKRLIEIGSYRGIRHRKGLPVRGQKTKTNARTRKGPKKLVGAKKKSK</sequence>
<organism>
    <name type="scientific">Clostridium kluyveri (strain ATCC 8527 / DSM 555 / NBRC 12016 / NCIMB 10680 / K1)</name>
    <dbReference type="NCBI Taxonomy" id="431943"/>
    <lineage>
        <taxon>Bacteria</taxon>
        <taxon>Bacillati</taxon>
        <taxon>Bacillota</taxon>
        <taxon>Clostridia</taxon>
        <taxon>Eubacteriales</taxon>
        <taxon>Clostridiaceae</taxon>
        <taxon>Clostridium</taxon>
    </lineage>
</organism>
<feature type="chain" id="PRO_1000086234" description="Small ribosomal subunit protein uS13">
    <location>
        <begin position="1"/>
        <end position="123"/>
    </location>
</feature>
<feature type="region of interest" description="Disordered" evidence="2">
    <location>
        <begin position="92"/>
        <end position="123"/>
    </location>
</feature>
<name>RS13_CLOK5</name>